<protein>
    <recommendedName>
        <fullName>Uncharacterized protein YibL</fullName>
    </recommendedName>
</protein>
<accession>P0ADK8</accession>
<accession>P36564</accession>
<accession>Q2M7R6</accession>
<name>YIBL_ECOLI</name>
<comment type="subcellular location">
    <subcellularLocation>
        <location evidence="1">Cytoplasm</location>
    </subcellularLocation>
    <text>Has been seen to comigrate with the 50S ribosomal subunit in sucrose gradients.</text>
</comment>
<proteinExistence type="evidence at protein level"/>
<dbReference type="EMBL" id="X51359">
    <property type="status" value="NOT_ANNOTATED_CDS"/>
    <property type="molecule type" value="Genomic_DNA"/>
</dbReference>
<dbReference type="EMBL" id="L13970">
    <property type="status" value="NOT_ANNOTATED_CDS"/>
    <property type="molecule type" value="Unassigned_DNA"/>
</dbReference>
<dbReference type="EMBL" id="U00039">
    <property type="protein sequence ID" value="AAB18579.1"/>
    <property type="molecule type" value="Genomic_DNA"/>
</dbReference>
<dbReference type="EMBL" id="U00096">
    <property type="protein sequence ID" value="AAC76626.1"/>
    <property type="molecule type" value="Genomic_DNA"/>
</dbReference>
<dbReference type="EMBL" id="AP009048">
    <property type="protein sequence ID" value="BAE77690.1"/>
    <property type="molecule type" value="Genomic_DNA"/>
</dbReference>
<dbReference type="EMBL" id="U03845">
    <property type="protein sequence ID" value="AAA92663.1"/>
    <property type="molecule type" value="Genomic_DNA"/>
</dbReference>
<dbReference type="PIR" id="S47823">
    <property type="entry name" value="S47823"/>
</dbReference>
<dbReference type="RefSeq" id="NP_418059.1">
    <property type="nucleotide sequence ID" value="NC_000913.3"/>
</dbReference>
<dbReference type="RefSeq" id="WP_000665680.1">
    <property type="nucleotide sequence ID" value="NZ_STEB01000024.1"/>
</dbReference>
<dbReference type="BMRB" id="P0ADK8"/>
<dbReference type="SMR" id="P0ADK8"/>
<dbReference type="BioGRID" id="4262560">
    <property type="interactions" value="53"/>
</dbReference>
<dbReference type="DIP" id="DIP-35909N"/>
<dbReference type="FunCoup" id="P0ADK8">
    <property type="interactions" value="278"/>
</dbReference>
<dbReference type="IntAct" id="P0ADK8">
    <property type="interactions" value="47"/>
</dbReference>
<dbReference type="STRING" id="511145.b3602"/>
<dbReference type="jPOST" id="P0ADK8"/>
<dbReference type="PaxDb" id="511145-b3602"/>
<dbReference type="EnsemblBacteria" id="AAC76626">
    <property type="protein sequence ID" value="AAC76626"/>
    <property type="gene ID" value="b3602"/>
</dbReference>
<dbReference type="GeneID" id="948115"/>
<dbReference type="KEGG" id="ecj:JW3577"/>
<dbReference type="KEGG" id="eco:b3602"/>
<dbReference type="KEGG" id="ecoc:C3026_19535"/>
<dbReference type="PATRIC" id="fig|511145.12.peg.3721"/>
<dbReference type="EchoBASE" id="EB1907"/>
<dbReference type="eggNOG" id="ENOG5031D5W">
    <property type="taxonomic scope" value="Bacteria"/>
</dbReference>
<dbReference type="HOGENOM" id="CLU_141025_0_0_6"/>
<dbReference type="InParanoid" id="P0ADK8"/>
<dbReference type="OMA" id="GFAPKEF"/>
<dbReference type="OrthoDB" id="6454978at2"/>
<dbReference type="PhylomeDB" id="P0ADK8"/>
<dbReference type="BioCyc" id="EcoCyc:EG11964-MONOMER"/>
<dbReference type="PRO" id="PR:P0ADK8"/>
<dbReference type="Proteomes" id="UP000000625">
    <property type="component" value="Chromosome"/>
</dbReference>
<dbReference type="GO" id="GO:0005829">
    <property type="term" value="C:cytosol"/>
    <property type="evidence" value="ECO:0000314"/>
    <property type="project" value="EcoCyc"/>
</dbReference>
<dbReference type="FunFam" id="3.30.1370.150:FF:000001">
    <property type="entry name" value="YibL family ribosome-associated protein"/>
    <property type="match status" value="1"/>
</dbReference>
<dbReference type="FunFam" id="4.10.860.10:FF:000003">
    <property type="entry name" value="YibL family ribosome-associated protein"/>
    <property type="match status" value="1"/>
</dbReference>
<dbReference type="Gene3D" id="3.30.1370.150">
    <property type="entry name" value="Uncharacterised protein PF10928, DUF2810"/>
    <property type="match status" value="1"/>
</dbReference>
<dbReference type="Gene3D" id="4.10.860.10">
    <property type="entry name" value="UVR domain"/>
    <property type="match status" value="1"/>
</dbReference>
<dbReference type="InterPro" id="IPR021230">
    <property type="entry name" value="DUF2810"/>
</dbReference>
<dbReference type="NCBIfam" id="NF008244">
    <property type="entry name" value="PRK11020.1"/>
    <property type="match status" value="1"/>
</dbReference>
<dbReference type="Pfam" id="PF10928">
    <property type="entry name" value="DUF2810"/>
    <property type="match status" value="1"/>
</dbReference>
<gene>
    <name type="primary">yibL</name>
    <name type="ordered locus">b3602</name>
    <name type="ordered locus">JW3577</name>
</gene>
<keyword id="KW-0963">Cytoplasm</keyword>
<keyword id="KW-1185">Reference proteome</keyword>
<organism>
    <name type="scientific">Escherichia coli (strain K12)</name>
    <dbReference type="NCBI Taxonomy" id="83333"/>
    <lineage>
        <taxon>Bacteria</taxon>
        <taxon>Pseudomonadati</taxon>
        <taxon>Pseudomonadota</taxon>
        <taxon>Gammaproteobacteria</taxon>
        <taxon>Enterobacterales</taxon>
        <taxon>Enterobacteriaceae</taxon>
        <taxon>Escherichia</taxon>
    </lineage>
</organism>
<feature type="chain" id="PRO_0000169608" description="Uncharacterized protein YibL">
    <location>
        <begin position="1"/>
        <end position="120"/>
    </location>
</feature>
<evidence type="ECO:0000269" key="1">
    <source>
    </source>
</evidence>
<sequence>MKEVEKNEIKRLSDRLDAIRHQQADLSLVEAADKYAELEKEKATLEAEIARLREVHSQKLSKEAQKLMKMPFQRAITKKEQADMGKLKKSVRGLVVVHPMTALGREMGLQEMTGFSKTAF</sequence>
<reference key="1">
    <citation type="journal article" date="1990" name="Mol. Microbiol.">
        <title>Corrected sequence of the mannitol (mtl) operon in Escherichia coli.</title>
        <authorList>
            <person name="Jaiang W."/>
            <person name="Wu L.F."/>
            <person name="Tomich J."/>
            <person name="Saier M.H. Jr."/>
            <person name="Nichaus W.G."/>
        </authorList>
    </citation>
    <scope>NUCLEOTIDE SEQUENCE [GENOMIC DNA]</scope>
    <source>
        <strain>K12</strain>
    </source>
</reference>
<reference key="2">
    <citation type="journal article" date="1993" name="J. Bacteriol.">
        <title>Three overlapping lct genes involved in L-lactate utilization by Escherichia coli.</title>
        <authorList>
            <person name="Dong J.M."/>
            <person name="Taylor J.S."/>
            <person name="Latour D.J."/>
            <person name="Iuchi S."/>
            <person name="Lin E.C.C."/>
        </authorList>
    </citation>
    <scope>NUCLEOTIDE SEQUENCE [GENOMIC DNA]</scope>
    <source>
        <strain>K12</strain>
    </source>
</reference>
<reference key="3">
    <citation type="journal article" date="1994" name="Nucleic Acids Res.">
        <title>Analysis of the Escherichia coli genome. V. DNA sequence of the region from 76.0 to 81.5 minutes.</title>
        <authorList>
            <person name="Sofia H.J."/>
            <person name="Burland V."/>
            <person name="Daniels D.L."/>
            <person name="Plunkett G. III"/>
            <person name="Blattner F.R."/>
        </authorList>
    </citation>
    <scope>NUCLEOTIDE SEQUENCE [LARGE SCALE GENOMIC DNA]</scope>
    <source>
        <strain>K12 / MG1655 / ATCC 47076</strain>
    </source>
</reference>
<reference key="4">
    <citation type="journal article" date="1997" name="Science">
        <title>The complete genome sequence of Escherichia coli K-12.</title>
        <authorList>
            <person name="Blattner F.R."/>
            <person name="Plunkett G. III"/>
            <person name="Bloch C.A."/>
            <person name="Perna N.T."/>
            <person name="Burland V."/>
            <person name="Riley M."/>
            <person name="Collado-Vides J."/>
            <person name="Glasner J.D."/>
            <person name="Rode C.K."/>
            <person name="Mayhew G.F."/>
            <person name="Gregor J."/>
            <person name="Davis N.W."/>
            <person name="Kirkpatrick H.A."/>
            <person name="Goeden M.A."/>
            <person name="Rose D.J."/>
            <person name="Mau B."/>
            <person name="Shao Y."/>
        </authorList>
    </citation>
    <scope>NUCLEOTIDE SEQUENCE [LARGE SCALE GENOMIC DNA]</scope>
    <source>
        <strain>K12 / MG1655 / ATCC 47076</strain>
    </source>
</reference>
<reference key="5">
    <citation type="journal article" date="2006" name="Mol. Syst. Biol.">
        <title>Highly accurate genome sequences of Escherichia coli K-12 strains MG1655 and W3110.</title>
        <authorList>
            <person name="Hayashi K."/>
            <person name="Morooka N."/>
            <person name="Yamamoto Y."/>
            <person name="Fujita K."/>
            <person name="Isono K."/>
            <person name="Choi S."/>
            <person name="Ohtsubo E."/>
            <person name="Baba T."/>
            <person name="Wanner B.L."/>
            <person name="Mori H."/>
            <person name="Horiuchi T."/>
        </authorList>
    </citation>
    <scope>NUCLEOTIDE SEQUENCE [LARGE SCALE GENOMIC DNA]</scope>
    <source>
        <strain>K12 / W3110 / ATCC 27325 / DSM 5911</strain>
    </source>
</reference>
<reference key="6">
    <citation type="journal article" date="1994" name="J. Bacteriol.">
        <title>The mannitol repressor (MtlR) of Escherichia coli.</title>
        <authorList>
            <person name="Figge R.M."/>
            <person name="Ramseier T.M."/>
            <person name="Saier M.H. Jr."/>
        </authorList>
    </citation>
    <scope>NUCLEOTIDE SEQUENCE [GENOMIC DNA] OF 1-24</scope>
    <source>
        <strain>K12</strain>
    </source>
</reference>
<reference key="7">
    <citation type="journal article" date="2006" name="J. Bacteriol.">
        <title>The Escherichia coli GTPase CgtAE is involved in late steps of large ribosome assembly.</title>
        <authorList>
            <person name="Jiang M."/>
            <person name="Datta K."/>
            <person name="Walker A."/>
            <person name="Strahler J."/>
            <person name="Bagamasbad P."/>
            <person name="Andrews P.C."/>
            <person name="Maddock J.R."/>
        </authorList>
    </citation>
    <scope>IDENTIFICATION BY MASS SPECTROMETRY</scope>
    <scope>SUBCELLULAR LOCATION</scope>
    <scope>ASSOCIATION WITH THE 50S RIBOSOMAL SUBUNIT</scope>
    <source>
        <strain>K12 / MG1655 / ATCC 47076</strain>
    </source>
</reference>